<protein>
    <recommendedName>
        <fullName evidence="1">tRNA dimethylallyltransferase</fullName>
        <ecNumber evidence="1">2.5.1.75</ecNumber>
    </recommendedName>
    <alternativeName>
        <fullName evidence="1">Dimethylallyl diphosphate:tRNA dimethylallyltransferase</fullName>
        <shortName evidence="1">DMAPP:tRNA dimethylallyltransferase</shortName>
        <shortName evidence="1">DMATase</shortName>
    </alternativeName>
    <alternativeName>
        <fullName evidence="1">Isopentenyl-diphosphate:tRNA isopentenyltransferase</fullName>
        <shortName evidence="1">IPP transferase</shortName>
        <shortName evidence="1">IPPT</shortName>
        <shortName evidence="1">IPTase</shortName>
    </alternativeName>
</protein>
<accession>Q04ZZ3</accession>
<gene>
    <name evidence="1" type="primary">miaA</name>
    <name type="ordered locus">LBL_1922</name>
</gene>
<keyword id="KW-0067">ATP-binding</keyword>
<keyword id="KW-0460">Magnesium</keyword>
<keyword id="KW-0547">Nucleotide-binding</keyword>
<keyword id="KW-0808">Transferase</keyword>
<keyword id="KW-0819">tRNA processing</keyword>
<evidence type="ECO:0000255" key="1">
    <source>
        <dbReference type="HAMAP-Rule" id="MF_00185"/>
    </source>
</evidence>
<name>MIAA_LEPBL</name>
<proteinExistence type="inferred from homology"/>
<feature type="chain" id="PRO_0000377205" description="tRNA dimethylallyltransferase">
    <location>
        <begin position="1"/>
        <end position="292"/>
    </location>
</feature>
<feature type="region of interest" description="Interaction with substrate tRNA" evidence="1">
    <location>
        <begin position="29"/>
        <end position="32"/>
    </location>
</feature>
<feature type="binding site" evidence="1">
    <location>
        <begin position="5"/>
        <end position="12"/>
    </location>
    <ligand>
        <name>ATP</name>
        <dbReference type="ChEBI" id="CHEBI:30616"/>
    </ligand>
</feature>
<feature type="binding site" evidence="1">
    <location>
        <begin position="7"/>
        <end position="12"/>
    </location>
    <ligand>
        <name>substrate</name>
    </ligand>
</feature>
<feature type="site" description="Interaction with substrate tRNA" evidence="1">
    <location>
        <position position="95"/>
    </location>
</feature>
<comment type="function">
    <text evidence="1">Catalyzes the transfer of a dimethylallyl group onto the adenine at position 37 in tRNAs that read codons beginning with uridine, leading to the formation of N6-(dimethylallyl)adenosine (i(6)A).</text>
</comment>
<comment type="catalytic activity">
    <reaction evidence="1">
        <text>adenosine(37) in tRNA + dimethylallyl diphosphate = N(6)-dimethylallyladenosine(37) in tRNA + diphosphate</text>
        <dbReference type="Rhea" id="RHEA:26482"/>
        <dbReference type="Rhea" id="RHEA-COMP:10162"/>
        <dbReference type="Rhea" id="RHEA-COMP:10375"/>
        <dbReference type="ChEBI" id="CHEBI:33019"/>
        <dbReference type="ChEBI" id="CHEBI:57623"/>
        <dbReference type="ChEBI" id="CHEBI:74411"/>
        <dbReference type="ChEBI" id="CHEBI:74415"/>
        <dbReference type="EC" id="2.5.1.75"/>
    </reaction>
</comment>
<comment type="cofactor">
    <cofactor evidence="1">
        <name>Mg(2+)</name>
        <dbReference type="ChEBI" id="CHEBI:18420"/>
    </cofactor>
</comment>
<comment type="subunit">
    <text evidence="1">Monomer.</text>
</comment>
<comment type="similarity">
    <text evidence="1">Belongs to the IPP transferase family.</text>
</comment>
<dbReference type="EC" id="2.5.1.75" evidence="1"/>
<dbReference type="EMBL" id="CP000348">
    <property type="protein sequence ID" value="ABJ79352.1"/>
    <property type="molecule type" value="Genomic_DNA"/>
</dbReference>
<dbReference type="SMR" id="Q04ZZ3"/>
<dbReference type="KEGG" id="lbl:LBL_1922"/>
<dbReference type="HOGENOM" id="CLU_032616_0_1_12"/>
<dbReference type="GO" id="GO:0005524">
    <property type="term" value="F:ATP binding"/>
    <property type="evidence" value="ECO:0007669"/>
    <property type="project" value="UniProtKB-UniRule"/>
</dbReference>
<dbReference type="GO" id="GO:0052381">
    <property type="term" value="F:tRNA dimethylallyltransferase activity"/>
    <property type="evidence" value="ECO:0007669"/>
    <property type="project" value="UniProtKB-UniRule"/>
</dbReference>
<dbReference type="GO" id="GO:0006400">
    <property type="term" value="P:tRNA modification"/>
    <property type="evidence" value="ECO:0007669"/>
    <property type="project" value="TreeGrafter"/>
</dbReference>
<dbReference type="Gene3D" id="1.10.20.140">
    <property type="match status" value="1"/>
</dbReference>
<dbReference type="Gene3D" id="3.40.50.300">
    <property type="entry name" value="P-loop containing nucleotide triphosphate hydrolases"/>
    <property type="match status" value="1"/>
</dbReference>
<dbReference type="HAMAP" id="MF_00185">
    <property type="entry name" value="IPP_trans"/>
    <property type="match status" value="1"/>
</dbReference>
<dbReference type="InterPro" id="IPR039657">
    <property type="entry name" value="Dimethylallyltransferase"/>
</dbReference>
<dbReference type="InterPro" id="IPR018022">
    <property type="entry name" value="IPT"/>
</dbReference>
<dbReference type="InterPro" id="IPR027417">
    <property type="entry name" value="P-loop_NTPase"/>
</dbReference>
<dbReference type="NCBIfam" id="TIGR00174">
    <property type="entry name" value="miaA"/>
    <property type="match status" value="1"/>
</dbReference>
<dbReference type="PANTHER" id="PTHR11088">
    <property type="entry name" value="TRNA DIMETHYLALLYLTRANSFERASE"/>
    <property type="match status" value="1"/>
</dbReference>
<dbReference type="PANTHER" id="PTHR11088:SF60">
    <property type="entry name" value="TRNA DIMETHYLALLYLTRANSFERASE"/>
    <property type="match status" value="1"/>
</dbReference>
<dbReference type="Pfam" id="PF01715">
    <property type="entry name" value="IPPT"/>
    <property type="match status" value="1"/>
</dbReference>
<dbReference type="SUPFAM" id="SSF52540">
    <property type="entry name" value="P-loop containing nucleoside triphosphate hydrolases"/>
    <property type="match status" value="1"/>
</dbReference>
<organism>
    <name type="scientific">Leptospira borgpetersenii serovar Hardjo-bovis (strain L550)</name>
    <dbReference type="NCBI Taxonomy" id="355276"/>
    <lineage>
        <taxon>Bacteria</taxon>
        <taxon>Pseudomonadati</taxon>
        <taxon>Spirochaetota</taxon>
        <taxon>Spirochaetia</taxon>
        <taxon>Leptospirales</taxon>
        <taxon>Leptospiraceae</taxon>
        <taxon>Leptospira</taxon>
    </lineage>
</organism>
<sequence>MILAAPTGAGKTSLVTELDPTRFEILSFDSRQIYKNMSIGTAAPTKKEQSKIAHHLVEVLSPSEAVDAGLYNRLAEEALQKVLNLDKIPVFTAGTGFYLKAFLFGMFPVPEIDVSVRDRVLSMSKEEKKNLLKELDPNALDKIFPEDDYRLGRALEVNLMGEKWSRLKIDPNTSAICRYDLDIRLGVFLDLDRKELYERINLRAKQMIEKGMADEAWKIQERFGETCPGLKSLGYNFALENKKGNSNLETFLADLSRSHRNYAKRQVTWFRKEPYVQPMGRSEALERIKHMK</sequence>
<reference key="1">
    <citation type="journal article" date="2006" name="Proc. Natl. Acad. Sci. U.S.A.">
        <title>Genome reduction in Leptospira borgpetersenii reflects limited transmission potential.</title>
        <authorList>
            <person name="Bulach D.M."/>
            <person name="Zuerner R.L."/>
            <person name="Wilson P."/>
            <person name="Seemann T."/>
            <person name="McGrath A."/>
            <person name="Cullen P.A."/>
            <person name="Davis J."/>
            <person name="Johnson M."/>
            <person name="Kuczek E."/>
            <person name="Alt D.P."/>
            <person name="Peterson-Burch B."/>
            <person name="Coppel R.L."/>
            <person name="Rood J.I."/>
            <person name="Davies J.K."/>
            <person name="Adler B."/>
        </authorList>
    </citation>
    <scope>NUCLEOTIDE SEQUENCE [LARGE SCALE GENOMIC DNA]</scope>
    <source>
        <strain>L550</strain>
    </source>
</reference>